<reference key="1">
    <citation type="submission" date="2008-05" db="EMBL/GenBank/DDBJ databases">
        <title>Complete sequence of Rhodopseudomonas palustris TIE-1.</title>
        <authorList>
            <consortium name="US DOE Joint Genome Institute"/>
            <person name="Lucas S."/>
            <person name="Copeland A."/>
            <person name="Lapidus A."/>
            <person name="Glavina del Rio T."/>
            <person name="Dalin E."/>
            <person name="Tice H."/>
            <person name="Pitluck S."/>
            <person name="Chain P."/>
            <person name="Malfatti S."/>
            <person name="Shin M."/>
            <person name="Vergez L."/>
            <person name="Lang D."/>
            <person name="Schmutz J."/>
            <person name="Larimer F."/>
            <person name="Land M."/>
            <person name="Hauser L."/>
            <person name="Kyrpides N."/>
            <person name="Mikhailova N."/>
            <person name="Emerson D."/>
            <person name="Newman D.K."/>
            <person name="Roden E."/>
            <person name="Richardson P."/>
        </authorList>
    </citation>
    <scope>NUCLEOTIDE SEQUENCE [LARGE SCALE GENOMIC DNA]</scope>
    <source>
        <strain>TIE-1</strain>
    </source>
</reference>
<accession>B3Q9C1</accession>
<proteinExistence type="inferred from homology"/>
<gene>
    <name evidence="1" type="primary">glgC</name>
    <name type="ordered locus">Rpal_0385</name>
</gene>
<dbReference type="EC" id="2.7.7.27" evidence="1"/>
<dbReference type="EMBL" id="CP001096">
    <property type="protein sequence ID" value="ACE98945.1"/>
    <property type="molecule type" value="Genomic_DNA"/>
</dbReference>
<dbReference type="RefSeq" id="WP_012494110.1">
    <property type="nucleotide sequence ID" value="NC_011004.1"/>
</dbReference>
<dbReference type="SMR" id="B3Q9C1"/>
<dbReference type="KEGG" id="rpt:Rpal_0385"/>
<dbReference type="HOGENOM" id="CLU_029499_14_1_5"/>
<dbReference type="OrthoDB" id="9801810at2"/>
<dbReference type="UniPathway" id="UPA00164"/>
<dbReference type="Proteomes" id="UP000001725">
    <property type="component" value="Chromosome"/>
</dbReference>
<dbReference type="GO" id="GO:0005524">
    <property type="term" value="F:ATP binding"/>
    <property type="evidence" value="ECO:0007669"/>
    <property type="project" value="UniProtKB-KW"/>
</dbReference>
<dbReference type="GO" id="GO:0008878">
    <property type="term" value="F:glucose-1-phosphate adenylyltransferase activity"/>
    <property type="evidence" value="ECO:0007669"/>
    <property type="project" value="UniProtKB-UniRule"/>
</dbReference>
<dbReference type="GO" id="GO:0005978">
    <property type="term" value="P:glycogen biosynthetic process"/>
    <property type="evidence" value="ECO:0007669"/>
    <property type="project" value="UniProtKB-UniRule"/>
</dbReference>
<dbReference type="CDD" id="cd02508">
    <property type="entry name" value="ADP_Glucose_PP"/>
    <property type="match status" value="1"/>
</dbReference>
<dbReference type="CDD" id="cd04651">
    <property type="entry name" value="LbH_G1P_AT_C"/>
    <property type="match status" value="1"/>
</dbReference>
<dbReference type="Gene3D" id="2.160.10.10">
    <property type="entry name" value="Hexapeptide repeat proteins"/>
    <property type="match status" value="1"/>
</dbReference>
<dbReference type="Gene3D" id="3.90.550.10">
    <property type="entry name" value="Spore Coat Polysaccharide Biosynthesis Protein SpsA, Chain A"/>
    <property type="match status" value="1"/>
</dbReference>
<dbReference type="HAMAP" id="MF_00624">
    <property type="entry name" value="GlgC"/>
    <property type="match status" value="1"/>
</dbReference>
<dbReference type="InterPro" id="IPR011831">
    <property type="entry name" value="ADP-Glc_PPase"/>
</dbReference>
<dbReference type="InterPro" id="IPR005836">
    <property type="entry name" value="ADP_Glu_pyroP_CS"/>
</dbReference>
<dbReference type="InterPro" id="IPR023049">
    <property type="entry name" value="GlgC_bac"/>
</dbReference>
<dbReference type="InterPro" id="IPR056818">
    <property type="entry name" value="GlmU/GlgC-like_hexapep"/>
</dbReference>
<dbReference type="InterPro" id="IPR005835">
    <property type="entry name" value="NTP_transferase_dom"/>
</dbReference>
<dbReference type="InterPro" id="IPR029044">
    <property type="entry name" value="Nucleotide-diphossugar_trans"/>
</dbReference>
<dbReference type="InterPro" id="IPR011004">
    <property type="entry name" value="Trimer_LpxA-like_sf"/>
</dbReference>
<dbReference type="NCBIfam" id="TIGR02091">
    <property type="entry name" value="glgC"/>
    <property type="match status" value="1"/>
</dbReference>
<dbReference type="NCBIfam" id="NF001947">
    <property type="entry name" value="PRK00725.1"/>
    <property type="match status" value="1"/>
</dbReference>
<dbReference type="NCBIfam" id="NF002023">
    <property type="entry name" value="PRK00844.1"/>
    <property type="match status" value="1"/>
</dbReference>
<dbReference type="PANTHER" id="PTHR43523:SF2">
    <property type="entry name" value="GLUCOSE-1-PHOSPHATE ADENYLYLTRANSFERASE"/>
    <property type="match status" value="1"/>
</dbReference>
<dbReference type="PANTHER" id="PTHR43523">
    <property type="entry name" value="GLUCOSE-1-PHOSPHATE ADENYLYLTRANSFERASE-RELATED"/>
    <property type="match status" value="1"/>
</dbReference>
<dbReference type="Pfam" id="PF24894">
    <property type="entry name" value="Hexapep_GlmU"/>
    <property type="match status" value="1"/>
</dbReference>
<dbReference type="Pfam" id="PF00483">
    <property type="entry name" value="NTP_transferase"/>
    <property type="match status" value="1"/>
</dbReference>
<dbReference type="SUPFAM" id="SSF53448">
    <property type="entry name" value="Nucleotide-diphospho-sugar transferases"/>
    <property type="match status" value="1"/>
</dbReference>
<dbReference type="SUPFAM" id="SSF51161">
    <property type="entry name" value="Trimeric LpxA-like enzymes"/>
    <property type="match status" value="1"/>
</dbReference>
<dbReference type="PROSITE" id="PS00808">
    <property type="entry name" value="ADP_GLC_PYROPHOSPH_1"/>
    <property type="match status" value="1"/>
</dbReference>
<dbReference type="PROSITE" id="PS00809">
    <property type="entry name" value="ADP_GLC_PYROPHOSPH_2"/>
    <property type="match status" value="1"/>
</dbReference>
<dbReference type="PROSITE" id="PS00810">
    <property type="entry name" value="ADP_GLC_PYROPHOSPH_3"/>
    <property type="match status" value="1"/>
</dbReference>
<organism>
    <name type="scientific">Rhodopseudomonas palustris (strain TIE-1)</name>
    <dbReference type="NCBI Taxonomy" id="395960"/>
    <lineage>
        <taxon>Bacteria</taxon>
        <taxon>Pseudomonadati</taxon>
        <taxon>Pseudomonadota</taxon>
        <taxon>Alphaproteobacteria</taxon>
        <taxon>Hyphomicrobiales</taxon>
        <taxon>Nitrobacteraceae</taxon>
        <taxon>Rhodopseudomonas</taxon>
    </lineage>
</organism>
<sequence>MSQGVTAPFARHAMAYVLAGGRGSRLMELTDWRAKPAVYFGGKSRIIDFALSNALNSGIRRIAVATQYKAHSLIRHLQRGWNFFRPERNESFDILPASQRVSEEMWYRGTADAVFQNIDIIESYDPKFIVLLAGDHVYKMDYEKMLQQHVEQGADVTVGCLEVPRAEATAFGVMHTDTTDRIISFLEKPADPPAMPGKADKSLVSMGIYVFETKFLLDELRRDAADPNSSHDFGKDIIPYIVKHGKAVAHHFDKSCRRSSSEAVSYWRDVGTVDAYWAANIDLTDIVPELDLYDREWPIWTYGEITPPAKFVHDKEGRRGEAVSSLVSGGCIISGASLRHSLLFTGVRVHSFSHVENTVVLPYADIGRSCRLKNVVIDAEVKLPAGLVVGEDPELDAKRFRRTENGICLITRAMIEKLDA</sequence>
<keyword id="KW-0067">ATP-binding</keyword>
<keyword id="KW-0119">Carbohydrate metabolism</keyword>
<keyword id="KW-0320">Glycogen biosynthesis</keyword>
<keyword id="KW-0321">Glycogen metabolism</keyword>
<keyword id="KW-0547">Nucleotide-binding</keyword>
<keyword id="KW-0548">Nucleotidyltransferase</keyword>
<keyword id="KW-0808">Transferase</keyword>
<protein>
    <recommendedName>
        <fullName evidence="1">Glucose-1-phosphate adenylyltransferase</fullName>
        <ecNumber evidence="1">2.7.7.27</ecNumber>
    </recommendedName>
    <alternativeName>
        <fullName evidence="1">ADP-glucose pyrophosphorylase</fullName>
        <shortName evidence="1">ADPGlc PPase</shortName>
    </alternativeName>
    <alternativeName>
        <fullName evidence="1">ADP-glucose synthase</fullName>
    </alternativeName>
</protein>
<evidence type="ECO:0000255" key="1">
    <source>
        <dbReference type="HAMAP-Rule" id="MF_00624"/>
    </source>
</evidence>
<name>GLGC_RHOPT</name>
<feature type="chain" id="PRO_1000130496" description="Glucose-1-phosphate adenylyltransferase">
    <location>
        <begin position="1"/>
        <end position="420"/>
    </location>
</feature>
<feature type="binding site" evidence="1">
    <location>
        <position position="107"/>
    </location>
    <ligand>
        <name>alpha-D-glucose 1-phosphate</name>
        <dbReference type="ChEBI" id="CHEBI:58601"/>
    </ligand>
</feature>
<feature type="binding site" evidence="1">
    <location>
        <position position="172"/>
    </location>
    <ligand>
        <name>alpha-D-glucose 1-phosphate</name>
        <dbReference type="ChEBI" id="CHEBI:58601"/>
    </ligand>
</feature>
<feature type="binding site" evidence="1">
    <location>
        <begin position="187"/>
        <end position="188"/>
    </location>
    <ligand>
        <name>alpha-D-glucose 1-phosphate</name>
        <dbReference type="ChEBI" id="CHEBI:58601"/>
    </ligand>
</feature>
<feature type="binding site" evidence="1">
    <location>
        <position position="205"/>
    </location>
    <ligand>
        <name>alpha-D-glucose 1-phosphate</name>
        <dbReference type="ChEBI" id="CHEBI:58601"/>
    </ligand>
</feature>
<comment type="function">
    <text evidence="1">Involved in the biosynthesis of ADP-glucose, a building block required for the elongation reactions to produce glycogen. Catalyzes the reaction between ATP and alpha-D-glucose 1-phosphate (G1P) to produce pyrophosphate and ADP-Glc.</text>
</comment>
<comment type="catalytic activity">
    <reaction evidence="1">
        <text>alpha-D-glucose 1-phosphate + ATP + H(+) = ADP-alpha-D-glucose + diphosphate</text>
        <dbReference type="Rhea" id="RHEA:12120"/>
        <dbReference type="ChEBI" id="CHEBI:15378"/>
        <dbReference type="ChEBI" id="CHEBI:30616"/>
        <dbReference type="ChEBI" id="CHEBI:33019"/>
        <dbReference type="ChEBI" id="CHEBI:57498"/>
        <dbReference type="ChEBI" id="CHEBI:58601"/>
        <dbReference type="EC" id="2.7.7.27"/>
    </reaction>
</comment>
<comment type="pathway">
    <text evidence="1">Glycan biosynthesis; glycogen biosynthesis.</text>
</comment>
<comment type="subunit">
    <text evidence="1">Homotetramer.</text>
</comment>
<comment type="similarity">
    <text evidence="1">Belongs to the bacterial/plant glucose-1-phosphate adenylyltransferase family.</text>
</comment>